<sequence length="326" mass="37247">MYGIEYTTILTILISIILLNYILKTITNTMDYIIFRFLLLIALISPFVRTQNYGMYLPITGSLDAVYTNSTSGEPFLTSTLCLYYPTEAKNEISDDEWENTLSQLFLTKGWPIGSVYFKDYNDINTFSVNPQLYCDYNVVLMRYDNTSELDASELADLILNEWLCNPMDISLYYYQQSSESNKWISMGTDCTVKVCPLNTQTLGIGCKTTDVNTFEIVASSEKLVITDVVNGVNHKINISINTCTIRNCNKLGPRENVAIIQVGGPNALDITADPTTVPQVQRIMRINWKKWWQVFYTVVDYINQVIQVMSKRSRSLDAAAFYYRI</sequence>
<keyword id="KW-0024">Alternative initiation</keyword>
<keyword id="KW-0106">Calcium</keyword>
<keyword id="KW-0167">Capsid protein</keyword>
<keyword id="KW-1015">Disulfide bond</keyword>
<keyword id="KW-0325">Glycoprotein</keyword>
<keyword id="KW-1038">Host endoplasmic reticulum</keyword>
<keyword id="KW-0945">Host-virus interaction</keyword>
<keyword id="KW-0479">Metal-binding</keyword>
<keyword id="KW-1152">Outer capsid protein</keyword>
<keyword id="KW-0732">Signal</keyword>
<keyword id="KW-1146">T=13 icosahedral capsid protein</keyword>
<keyword id="KW-0946">Virion</keyword>
<organism>
    <name type="scientific">Rotavirus A (strain RVA/Human/Venezuela/HN126/1983/G2P[X])</name>
    <name type="common">RV-A</name>
    <name type="synonym">Rotavirus A (strain HN-126)</name>
    <dbReference type="NCBI Taxonomy" id="10951"/>
    <lineage>
        <taxon>Viruses</taxon>
        <taxon>Riboviria</taxon>
        <taxon>Orthornavirae</taxon>
        <taxon>Duplornaviricota</taxon>
        <taxon>Resentoviricetes</taxon>
        <taxon>Reovirales</taxon>
        <taxon>Sedoreoviridae</taxon>
        <taxon>Rotavirus</taxon>
        <taxon>Rotavirus A</taxon>
    </lineage>
</organism>
<accession>P11851</accession>
<reference key="1">
    <citation type="journal article" date="1987" name="Virology">
        <title>Comparison of the amino acid sequences of the major neutralization protein of four human rotavirus serotypes.</title>
        <authorList>
            <person name="Green K.Y."/>
            <person name="Midthun K."/>
            <person name="Gorziglia M."/>
            <person name="Hoshino Y."/>
            <person name="Kapikian A.Z."/>
            <person name="Chanock R.M."/>
            <person name="Flores J."/>
        </authorList>
    </citation>
    <scope>NUCLEOTIDE SEQUENCE</scope>
</reference>
<proteinExistence type="inferred from homology"/>
<organismHost>
    <name type="scientific">Homo sapiens</name>
    <name type="common">Human</name>
    <dbReference type="NCBI Taxonomy" id="9606"/>
</organismHost>
<comment type="function">
    <text evidence="2">Calcium-binding protein that interacts with rotavirus cell receptors once the initial attachment by VP4 has been achieved. Rotavirus attachment and entry into the host cell probably involves multiple sequential contacts between the outer capsid proteins VP4 and VP7, and the cell receptors. Following entry into the host cell, low intracellular or intravesicular Ca(2+) concentration probably causes the calcium-stabilized VP7 trimers to dissociate from the virion. This step is probably necessary for the membrane-disrupting entry step and the release of VP4, which is locked onto the virion by VP7.</text>
</comment>
<comment type="subunit">
    <text evidence="2">Homotrimer; disulfide-linked. 2 Ca(2+) ions bound at each subunit interface in the trimer hold the trimer together. Interacts with the intermediate capsid protein VP6. Interacts with the outer capsid protein VP5*.</text>
</comment>
<comment type="subcellular location">
    <subcellularLocation>
        <location evidence="2">Virion</location>
    </subcellularLocation>
    <subcellularLocation>
        <location evidence="2">Host endoplasmic reticulum lumen</location>
    </subcellularLocation>
    <text evidence="2">The outer layer contains 780 copies of VP7, grouped as 260 trimers. Immature double-layered particles assembled in the cytoplasm bud across the membrane of the endoplasmic reticulum, acquiring during this process a transient lipid membrane that is modified with the ER resident viral glycoproteins NSP4 and VP7; these enveloped particles also contain VP4. As the particles move towards the interior of the ER cisternae, the transient lipid membrane and the non-structural protein NSP4 are lost, while the virus surface proteins VP4 and VP7 rearrange to form the outermost virus protein layer, yielding mature infectious triple-layered particles.</text>
</comment>
<comment type="alternative products">
    <event type="alternative initiation"/>
    <isoform>
        <id>P11851-1</id>
        <name>1</name>
        <sequence type="displayed"/>
    </isoform>
    <isoform>
        <id>P11851-2</id>
        <name>2</name>
        <sequence type="described" ref="VSP_038633"/>
    </isoform>
</comment>
<comment type="PTM">
    <text evidence="2">N-glycosylated.</text>
</comment>
<comment type="PTM">
    <text evidence="2">The N-terminus is blocked possibly by pyroglutamic acid.</text>
</comment>
<comment type="miscellaneous">
    <text evidence="2">Some rotavirus strains are neuraminidase-sensitive and require sialic acid to attach to the cell surface. Some rotavirus strains are integrin-dependent. Some rotavirus strains depend on ganglioside for their entry into the host cell. Hsp70 also seems to be involved in the entry of some strains.</text>
</comment>
<comment type="miscellaneous">
    <text evidence="2">In group A rotaviruses, VP7 defines the G serotype.</text>
</comment>
<comment type="miscellaneous">
    <molecule>Isoform 2</molecule>
    <text evidence="3">Produced by alternative initiation at Met-30 of isoform 1.</text>
</comment>
<comment type="similarity">
    <text evidence="2">Belongs to the rotavirus VP7 family.</text>
</comment>
<feature type="signal peptide" evidence="2">
    <location>
        <begin position="1"/>
        <end position="50"/>
    </location>
</feature>
<feature type="chain" id="PRO_0000149598" description="Outer capsid glycoprotein VP7" evidence="2">
    <location>
        <begin position="51"/>
        <end position="326"/>
    </location>
</feature>
<feature type="region of interest" description="CNP motif; interaction with ITGAV/ITGB3" evidence="2">
    <location>
        <begin position="165"/>
        <end position="167"/>
    </location>
</feature>
<feature type="region of interest" description="GPR motif; interaction with ITGAX/ITGB2" evidence="2">
    <location>
        <begin position="253"/>
        <end position="255"/>
    </location>
</feature>
<feature type="binding site" evidence="2">
    <location>
        <position position="95"/>
    </location>
    <ligand>
        <name>Ca(2+)</name>
        <dbReference type="ChEBI" id="CHEBI:29108"/>
        <label>1</label>
    </ligand>
</feature>
<feature type="binding site" evidence="2">
    <location>
        <position position="177"/>
    </location>
    <ligand>
        <name>Ca(2+)</name>
        <dbReference type="ChEBI" id="CHEBI:29108"/>
        <label>2</label>
    </ligand>
</feature>
<feature type="binding site" evidence="2">
    <location>
        <position position="206"/>
    </location>
    <ligand>
        <name>Ca(2+)</name>
        <dbReference type="ChEBI" id="CHEBI:29108"/>
        <label>1</label>
    </ligand>
</feature>
<feature type="binding site" evidence="2">
    <location>
        <position position="214"/>
    </location>
    <ligand>
        <name>Ca(2+)</name>
        <dbReference type="ChEBI" id="CHEBI:29108"/>
        <label>1</label>
    </ligand>
</feature>
<feature type="binding site" evidence="2">
    <location>
        <position position="216"/>
    </location>
    <ligand>
        <name>Ca(2+)</name>
        <dbReference type="ChEBI" id="CHEBI:29108"/>
        <label>1</label>
    </ligand>
</feature>
<feature type="binding site" evidence="2">
    <location>
        <position position="228"/>
    </location>
    <ligand>
        <name>Ca(2+)</name>
        <dbReference type="ChEBI" id="CHEBI:29108"/>
        <label>2</label>
    </ligand>
</feature>
<feature type="binding site" evidence="2">
    <location>
        <position position="229"/>
    </location>
    <ligand>
        <name>Ca(2+)</name>
        <dbReference type="ChEBI" id="CHEBI:29108"/>
        <label>2</label>
    </ligand>
</feature>
<feature type="binding site" evidence="2">
    <location>
        <position position="301"/>
    </location>
    <ligand>
        <name>Ca(2+)</name>
        <dbReference type="ChEBI" id="CHEBI:29108"/>
        <label>2</label>
    </ligand>
</feature>
<feature type="glycosylation site" description="N-linked (GlcNAc...) asparagine; by host" evidence="1">
    <location>
        <position position="69"/>
    </location>
</feature>
<feature type="glycosylation site" description="N-linked (GlcNAc...) asparagine; by host" evidence="1">
    <location>
        <position position="146"/>
    </location>
</feature>
<feature type="glycosylation site" description="N-linked (GlcNAc...) asparagine; by host" evidence="1">
    <location>
        <position position="238"/>
    </location>
</feature>
<feature type="disulfide bond" evidence="2">
    <location>
        <begin position="82"/>
        <end position="135"/>
    </location>
</feature>
<feature type="disulfide bond" evidence="2">
    <location>
        <begin position="165"/>
        <end position="249"/>
    </location>
</feature>
<feature type="disulfide bond" evidence="2">
    <location>
        <begin position="191"/>
        <end position="244"/>
    </location>
</feature>
<feature type="disulfide bond" evidence="2">
    <location>
        <begin position="196"/>
        <end position="207"/>
    </location>
</feature>
<feature type="splice variant" id="VSP_038633" description="In isoform 2." evidence="3">
    <location>
        <begin position="1"/>
        <end position="29"/>
    </location>
</feature>
<protein>
    <recommendedName>
        <fullName evidence="2">Outer capsid glycoprotein VP7</fullName>
    </recommendedName>
</protein>
<dbReference type="PIR" id="F27620">
    <property type="entry name" value="VGXRHN"/>
</dbReference>
<dbReference type="SMR" id="P11851"/>
<dbReference type="GO" id="GO:0044166">
    <property type="term" value="C:host cell endoplasmic reticulum lumen"/>
    <property type="evidence" value="ECO:0007669"/>
    <property type="project" value="UniProtKB-SubCell"/>
</dbReference>
<dbReference type="GO" id="GO:0039621">
    <property type="term" value="C:T=13 icosahedral viral capsid"/>
    <property type="evidence" value="ECO:0007669"/>
    <property type="project" value="UniProtKB-UniRule"/>
</dbReference>
<dbReference type="GO" id="GO:0039624">
    <property type="term" value="C:viral outer capsid"/>
    <property type="evidence" value="ECO:0007669"/>
    <property type="project" value="UniProtKB-UniRule"/>
</dbReference>
<dbReference type="GO" id="GO:0046872">
    <property type="term" value="F:metal ion binding"/>
    <property type="evidence" value="ECO:0007669"/>
    <property type="project" value="UniProtKB-KW"/>
</dbReference>
<dbReference type="Gene3D" id="3.40.50.11130">
    <property type="entry name" value="Glycoprotein VP7, domain 1"/>
    <property type="match status" value="1"/>
</dbReference>
<dbReference type="Gene3D" id="2.60.120.800">
    <property type="entry name" value="Rotavirus outer-layer protein VP7, domain 2"/>
    <property type="match status" value="1"/>
</dbReference>
<dbReference type="HAMAP" id="MF_04130">
    <property type="entry name" value="Rota_VP7"/>
    <property type="match status" value="1"/>
</dbReference>
<dbReference type="HAMAP" id="MF_04131">
    <property type="entry name" value="Rota_VP7_A"/>
    <property type="match status" value="1"/>
</dbReference>
<dbReference type="InterPro" id="IPR001963">
    <property type="entry name" value="VP7"/>
</dbReference>
<dbReference type="InterPro" id="IPR042207">
    <property type="entry name" value="VP7_1"/>
</dbReference>
<dbReference type="InterPro" id="IPR042210">
    <property type="entry name" value="VP7_2"/>
</dbReference>
<dbReference type="Pfam" id="PF00434">
    <property type="entry name" value="VP7"/>
    <property type="match status" value="1"/>
</dbReference>
<name>VP7_ROTHH</name>
<evidence type="ECO:0000255" key="1"/>
<evidence type="ECO:0000255" key="2">
    <source>
        <dbReference type="HAMAP-Rule" id="MF_04131"/>
    </source>
</evidence>
<evidence type="ECO:0000305" key="3"/>